<gene>
    <name type="primary">HSP26-A</name>
</gene>
<accession>P32110</accession>
<feature type="chain" id="PRO_0000185871" description="Probable glutathione S-transferase">
    <location>
        <begin position="1"/>
        <end position="225"/>
    </location>
</feature>
<feature type="domain" description="GST N-terminal">
    <location>
        <begin position="6"/>
        <end position="85"/>
    </location>
</feature>
<feature type="domain" description="GST C-terminal">
    <location>
        <begin position="90"/>
        <end position="214"/>
    </location>
</feature>
<feature type="binding site" evidence="1">
    <location>
        <position position="16"/>
    </location>
    <ligand>
        <name>glutathione</name>
        <dbReference type="ChEBI" id="CHEBI:57925"/>
    </ligand>
</feature>
<feature type="binding site" evidence="1">
    <location>
        <position position="43"/>
    </location>
    <ligand>
        <name>glutathione</name>
        <dbReference type="ChEBI" id="CHEBI:57925"/>
    </ligand>
</feature>
<feature type="binding site" evidence="1">
    <location>
        <position position="57"/>
    </location>
    <ligand>
        <name>glutathione</name>
        <dbReference type="ChEBI" id="CHEBI:57925"/>
    </ligand>
</feature>
<feature type="binding site" evidence="1">
    <location>
        <begin position="69"/>
        <end position="70"/>
    </location>
    <ligand>
        <name>glutathione</name>
        <dbReference type="ChEBI" id="CHEBI:57925"/>
    </ligand>
</feature>
<feature type="sequence conflict" description="In Ref. 2; AAA33943." evidence="2" ref="2">
    <original>A</original>
    <variation>E</variation>
    <location>
        <position position="216"/>
    </location>
</feature>
<organism>
    <name type="scientific">Glycine max</name>
    <name type="common">Soybean</name>
    <name type="synonym">Glycine hispida</name>
    <dbReference type="NCBI Taxonomy" id="3847"/>
    <lineage>
        <taxon>Eukaryota</taxon>
        <taxon>Viridiplantae</taxon>
        <taxon>Streptophyta</taxon>
        <taxon>Embryophyta</taxon>
        <taxon>Tracheophyta</taxon>
        <taxon>Spermatophyta</taxon>
        <taxon>Magnoliopsida</taxon>
        <taxon>eudicotyledons</taxon>
        <taxon>Gunneridae</taxon>
        <taxon>Pentapetalae</taxon>
        <taxon>rosids</taxon>
        <taxon>fabids</taxon>
        <taxon>Fabales</taxon>
        <taxon>Fabaceae</taxon>
        <taxon>Papilionoideae</taxon>
        <taxon>50 kb inversion clade</taxon>
        <taxon>NPAAA clade</taxon>
        <taxon>indigoferoid/millettioid clade</taxon>
        <taxon>Phaseoleae</taxon>
        <taxon>Glycine</taxon>
        <taxon>Glycine subgen. Soja</taxon>
    </lineage>
</organism>
<evidence type="ECO:0000250" key="1"/>
<evidence type="ECO:0000305" key="2"/>
<reference key="1">
    <citation type="journal article" date="1988" name="Mol. Cell. Biol.">
        <title>Characterization of Gmhsp26-A, a stress gene encoding a divergent heat shock protein of soybean: heavy-metal-induced inhibition of intron processing.</title>
        <authorList>
            <person name="Czarnecka E."/>
            <person name="Nagao R.T."/>
            <person name="Key J.L."/>
            <person name="Gurley W.B."/>
        </authorList>
    </citation>
    <scope>NUCLEOTIDE SEQUENCE [GENOMIC DNA]</scope>
</reference>
<reference key="2">
    <citation type="journal article" date="1988" name="J. Biol. Chem.">
        <title>Regulation of expression of an auxin-induced soybean sequence by cadmium.</title>
        <authorList>
            <person name="Hagen G."/>
            <person name="Uhrhammer N."/>
            <person name="Guilfoyle T.J."/>
        </authorList>
    </citation>
    <scope>NUCLEOTIDE SEQUENCE [GENOMIC DNA] OF 86-225</scope>
</reference>
<name>GSTX6_SOYBN</name>
<comment type="function">
    <text>May play a role in the cellular response to stress.</text>
</comment>
<comment type="catalytic activity">
    <reaction>
        <text>RX + glutathione = an S-substituted glutathione + a halide anion + H(+)</text>
        <dbReference type="Rhea" id="RHEA:16437"/>
        <dbReference type="ChEBI" id="CHEBI:15378"/>
        <dbReference type="ChEBI" id="CHEBI:16042"/>
        <dbReference type="ChEBI" id="CHEBI:17792"/>
        <dbReference type="ChEBI" id="CHEBI:57925"/>
        <dbReference type="ChEBI" id="CHEBI:90779"/>
        <dbReference type="EC" id="2.5.1.18"/>
    </reaction>
</comment>
<comment type="induction">
    <text>By heat shock and auxin; by heavy metals like cadmium, silver and copper.</text>
</comment>
<comment type="similarity">
    <text evidence="2">Belongs to the GST superfamily. HSP26 family.</text>
</comment>
<sequence>MAATQEDVKLLGIVGSPFVCRVQIALKLKGVEYKFLEENLGNKSDLLLKYNPVHKKVPVFVHNEQPIAESLVIVEYIDETWKNNPILPSDPYQRALARFWSKFIDDKIVGAVSKSVFTVDEKEREKNVEETYEALQFLENELKDKKFFGGEEFGLVDIAAVFIAFWIPIFQEIAGLQLFTSEKFPILYKWSQEFLNHPFVHEVLPPRDPLFAYFKARYESLSASK</sequence>
<dbReference type="EC" id="2.5.1.18"/>
<dbReference type="EMBL" id="M20363">
    <property type="protein sequence ID" value="AAA33973.1"/>
    <property type="molecule type" value="Genomic_DNA"/>
</dbReference>
<dbReference type="EMBL" id="J03197">
    <property type="protein sequence ID" value="AAA33943.1"/>
    <property type="molecule type" value="Genomic_DNA"/>
</dbReference>
<dbReference type="PIR" id="A33654">
    <property type="entry name" value="A33654"/>
</dbReference>
<dbReference type="RefSeq" id="NP_001238439.1">
    <property type="nucleotide sequence ID" value="NM_001251510.2"/>
</dbReference>
<dbReference type="SMR" id="P32110"/>
<dbReference type="FunCoup" id="P32110">
    <property type="interactions" value="364"/>
</dbReference>
<dbReference type="STRING" id="3847.P32110"/>
<dbReference type="PaxDb" id="3847-GLYMA07G16810.1"/>
<dbReference type="EnsemblPlants" id="KRH49213">
    <property type="protein sequence ID" value="KRH49213"/>
    <property type="gene ID" value="GLYMA_07G139700"/>
</dbReference>
<dbReference type="GeneID" id="100527851"/>
<dbReference type="Gramene" id="KRH49213">
    <property type="protein sequence ID" value="KRH49213"/>
    <property type="gene ID" value="GLYMA_07G139700"/>
</dbReference>
<dbReference type="KEGG" id="gmx:100527851"/>
<dbReference type="eggNOG" id="KOG0406">
    <property type="taxonomic scope" value="Eukaryota"/>
</dbReference>
<dbReference type="HOGENOM" id="CLU_011226_18_1_1"/>
<dbReference type="InParanoid" id="P32110"/>
<dbReference type="OMA" id="IRGKCIA"/>
<dbReference type="OrthoDB" id="4951845at2759"/>
<dbReference type="SABIO-RK" id="P32110"/>
<dbReference type="Proteomes" id="UP000008827">
    <property type="component" value="Chromosome 7"/>
</dbReference>
<dbReference type="GO" id="GO:0005737">
    <property type="term" value="C:cytoplasm"/>
    <property type="evidence" value="ECO:0000318"/>
    <property type="project" value="GO_Central"/>
</dbReference>
<dbReference type="GO" id="GO:0004364">
    <property type="term" value="F:glutathione transferase activity"/>
    <property type="evidence" value="ECO:0000318"/>
    <property type="project" value="GO_Central"/>
</dbReference>
<dbReference type="GO" id="GO:0006749">
    <property type="term" value="P:glutathione metabolic process"/>
    <property type="evidence" value="ECO:0000318"/>
    <property type="project" value="GO_Central"/>
</dbReference>
<dbReference type="GO" id="GO:0009737">
    <property type="term" value="P:response to abscisic acid"/>
    <property type="evidence" value="ECO:0000304"/>
    <property type="project" value="AgBase"/>
</dbReference>
<dbReference type="GO" id="GO:0009733">
    <property type="term" value="P:response to auxin"/>
    <property type="evidence" value="ECO:0000304"/>
    <property type="project" value="AgBase"/>
</dbReference>
<dbReference type="GO" id="GO:0009735">
    <property type="term" value="P:response to cytokinin"/>
    <property type="evidence" value="ECO:0000304"/>
    <property type="project" value="AgBase"/>
</dbReference>
<dbReference type="GO" id="GO:0009739">
    <property type="term" value="P:response to gibberellin"/>
    <property type="evidence" value="ECO:0000304"/>
    <property type="project" value="AgBase"/>
</dbReference>
<dbReference type="GO" id="GO:0009408">
    <property type="term" value="P:response to heat"/>
    <property type="evidence" value="ECO:0000304"/>
    <property type="project" value="AgBase"/>
</dbReference>
<dbReference type="GO" id="GO:0010038">
    <property type="term" value="P:response to metal ion"/>
    <property type="evidence" value="ECO:0000304"/>
    <property type="project" value="AgBase"/>
</dbReference>
<dbReference type="CDD" id="cd03185">
    <property type="entry name" value="GST_C_Tau"/>
    <property type="match status" value="1"/>
</dbReference>
<dbReference type="CDD" id="cd03058">
    <property type="entry name" value="GST_N_Tau"/>
    <property type="match status" value="1"/>
</dbReference>
<dbReference type="FunFam" id="1.20.1050.10:FF:000012">
    <property type="entry name" value="Tau class glutathione S-transferase"/>
    <property type="match status" value="1"/>
</dbReference>
<dbReference type="FunFam" id="3.40.30.10:FF:000014">
    <property type="entry name" value="Tau class glutathione S-transferase"/>
    <property type="match status" value="1"/>
</dbReference>
<dbReference type="Gene3D" id="1.20.1050.10">
    <property type="match status" value="1"/>
</dbReference>
<dbReference type="Gene3D" id="3.40.30.10">
    <property type="entry name" value="Glutaredoxin"/>
    <property type="match status" value="1"/>
</dbReference>
<dbReference type="InterPro" id="IPR010987">
    <property type="entry name" value="Glutathione-S-Trfase_C-like"/>
</dbReference>
<dbReference type="InterPro" id="IPR036282">
    <property type="entry name" value="Glutathione-S-Trfase_C_sf"/>
</dbReference>
<dbReference type="InterPro" id="IPR004045">
    <property type="entry name" value="Glutathione_S-Trfase_N"/>
</dbReference>
<dbReference type="InterPro" id="IPR004046">
    <property type="entry name" value="GST_C"/>
</dbReference>
<dbReference type="InterPro" id="IPR045074">
    <property type="entry name" value="GST_C_Tau"/>
</dbReference>
<dbReference type="InterPro" id="IPR045073">
    <property type="entry name" value="Omega/Tau-like"/>
</dbReference>
<dbReference type="InterPro" id="IPR036249">
    <property type="entry name" value="Thioredoxin-like_sf"/>
</dbReference>
<dbReference type="PANTHER" id="PTHR11260">
    <property type="entry name" value="GLUTATHIONE S-TRANSFERASE, GST, SUPERFAMILY, GST DOMAIN CONTAINING"/>
    <property type="match status" value="1"/>
</dbReference>
<dbReference type="PANTHER" id="PTHR11260:SF719">
    <property type="entry name" value="GLUTATHIONE S-TRANSFERASE-RELATED"/>
    <property type="match status" value="1"/>
</dbReference>
<dbReference type="Pfam" id="PF00043">
    <property type="entry name" value="GST_C"/>
    <property type="match status" value="1"/>
</dbReference>
<dbReference type="Pfam" id="PF02798">
    <property type="entry name" value="GST_N"/>
    <property type="match status" value="1"/>
</dbReference>
<dbReference type="SFLD" id="SFLDG01152">
    <property type="entry name" value="Main.3:_Omega-_and_Tau-like"/>
    <property type="match status" value="1"/>
</dbReference>
<dbReference type="SFLD" id="SFLDG00358">
    <property type="entry name" value="Main_(cytGST)"/>
    <property type="match status" value="1"/>
</dbReference>
<dbReference type="SUPFAM" id="SSF47616">
    <property type="entry name" value="GST C-terminal domain-like"/>
    <property type="match status" value="1"/>
</dbReference>
<dbReference type="SUPFAM" id="SSF52833">
    <property type="entry name" value="Thioredoxin-like"/>
    <property type="match status" value="1"/>
</dbReference>
<dbReference type="PROSITE" id="PS50405">
    <property type="entry name" value="GST_CTER"/>
    <property type="match status" value="1"/>
</dbReference>
<dbReference type="PROSITE" id="PS50404">
    <property type="entry name" value="GST_NTER"/>
    <property type="match status" value="1"/>
</dbReference>
<protein>
    <recommendedName>
        <fullName>Probable glutathione S-transferase</fullName>
        <ecNumber>2.5.1.18</ecNumber>
    </recommendedName>
    <alternativeName>
        <fullName>G2-4</fullName>
    </alternativeName>
    <alternativeName>
        <fullName>Heat shock protein 26A</fullName>
    </alternativeName>
</protein>
<proteinExistence type="evidence at transcript level"/>
<keyword id="KW-1185">Reference proteome</keyword>
<keyword id="KW-0346">Stress response</keyword>
<keyword id="KW-0808">Transferase</keyword>